<protein>
    <recommendedName>
        <fullName>Ribonuclease HIII</fullName>
        <shortName>RNase HIII</shortName>
        <ecNumber>3.1.26.4</ecNumber>
    </recommendedName>
</protein>
<dbReference type="EC" id="3.1.26.4"/>
<dbReference type="EMBL" id="Z75208">
    <property type="protein sequence ID" value="CAA99565.1"/>
    <property type="molecule type" value="Genomic_DNA"/>
</dbReference>
<dbReference type="EMBL" id="AL009126">
    <property type="protein sequence ID" value="CAB14822.1"/>
    <property type="molecule type" value="Genomic_DNA"/>
</dbReference>
<dbReference type="PIR" id="H69984">
    <property type="entry name" value="H69984"/>
</dbReference>
<dbReference type="RefSeq" id="NP_390740.1">
    <property type="nucleotide sequence ID" value="NC_000964.3"/>
</dbReference>
<dbReference type="RefSeq" id="WP_003245949.1">
    <property type="nucleotide sequence ID" value="NZ_OZ025638.1"/>
</dbReference>
<dbReference type="SMR" id="P94541"/>
<dbReference type="FunCoup" id="P94541">
    <property type="interactions" value="34"/>
</dbReference>
<dbReference type="STRING" id="224308.BSU28620"/>
<dbReference type="PaxDb" id="224308-BSU28620"/>
<dbReference type="EnsemblBacteria" id="CAB14822">
    <property type="protein sequence ID" value="CAB14822"/>
    <property type="gene ID" value="BSU_28620"/>
</dbReference>
<dbReference type="GeneID" id="937436"/>
<dbReference type="KEGG" id="bsu:BSU28620"/>
<dbReference type="PATRIC" id="fig|224308.179.peg.3109"/>
<dbReference type="eggNOG" id="COG1039">
    <property type="taxonomic scope" value="Bacteria"/>
</dbReference>
<dbReference type="InParanoid" id="P94541"/>
<dbReference type="OrthoDB" id="9777935at2"/>
<dbReference type="PhylomeDB" id="P94541"/>
<dbReference type="BioCyc" id="BSUB:BSU28620-MONOMER"/>
<dbReference type="Proteomes" id="UP000001570">
    <property type="component" value="Chromosome"/>
</dbReference>
<dbReference type="GO" id="GO:0005737">
    <property type="term" value="C:cytoplasm"/>
    <property type="evidence" value="ECO:0007669"/>
    <property type="project" value="UniProtKB-SubCell"/>
</dbReference>
<dbReference type="GO" id="GO:0032299">
    <property type="term" value="C:ribonuclease H2 complex"/>
    <property type="evidence" value="ECO:0000318"/>
    <property type="project" value="GO_Central"/>
</dbReference>
<dbReference type="GO" id="GO:0000287">
    <property type="term" value="F:magnesium ion binding"/>
    <property type="evidence" value="ECO:0007669"/>
    <property type="project" value="UniProtKB-UniRule"/>
</dbReference>
<dbReference type="GO" id="GO:0003723">
    <property type="term" value="F:RNA binding"/>
    <property type="evidence" value="ECO:0007669"/>
    <property type="project" value="InterPro"/>
</dbReference>
<dbReference type="GO" id="GO:0004523">
    <property type="term" value="F:RNA-DNA hybrid ribonuclease activity"/>
    <property type="evidence" value="ECO:0000318"/>
    <property type="project" value="GO_Central"/>
</dbReference>
<dbReference type="GO" id="GO:0043137">
    <property type="term" value="P:DNA replication, removal of RNA primer"/>
    <property type="evidence" value="ECO:0000318"/>
    <property type="project" value="GO_Central"/>
</dbReference>
<dbReference type="GO" id="GO:0006298">
    <property type="term" value="P:mismatch repair"/>
    <property type="evidence" value="ECO:0000318"/>
    <property type="project" value="GO_Central"/>
</dbReference>
<dbReference type="CDD" id="cd06590">
    <property type="entry name" value="RNase_HII_bacteria_HIII_like"/>
    <property type="match status" value="1"/>
</dbReference>
<dbReference type="CDD" id="cd14796">
    <property type="entry name" value="RNAse_HIII_N"/>
    <property type="match status" value="1"/>
</dbReference>
<dbReference type="FunFam" id="3.30.420.10:FF:000047">
    <property type="entry name" value="Ribonuclease HIII"/>
    <property type="match status" value="1"/>
</dbReference>
<dbReference type="Gene3D" id="3.30.420.10">
    <property type="entry name" value="Ribonuclease H-like superfamily/Ribonuclease H"/>
    <property type="match status" value="1"/>
</dbReference>
<dbReference type="Gene3D" id="3.30.310.10">
    <property type="entry name" value="TATA-Binding Protein"/>
    <property type="match status" value="1"/>
</dbReference>
<dbReference type="HAMAP" id="MF_00053">
    <property type="entry name" value="RNase_HIII"/>
    <property type="match status" value="1"/>
</dbReference>
<dbReference type="InterPro" id="IPR001352">
    <property type="entry name" value="RNase_HII/HIII"/>
</dbReference>
<dbReference type="InterPro" id="IPR024567">
    <property type="entry name" value="RNase_HII/HIII_dom"/>
</dbReference>
<dbReference type="InterPro" id="IPR004641">
    <property type="entry name" value="RNase_HIII"/>
</dbReference>
<dbReference type="InterPro" id="IPR024568">
    <property type="entry name" value="RNase_HIII_N"/>
</dbReference>
<dbReference type="InterPro" id="IPR012337">
    <property type="entry name" value="RNaseH-like_sf"/>
</dbReference>
<dbReference type="InterPro" id="IPR036397">
    <property type="entry name" value="RNaseH_sf"/>
</dbReference>
<dbReference type="InterPro" id="IPR012295">
    <property type="entry name" value="TBP_dom_sf"/>
</dbReference>
<dbReference type="NCBIfam" id="TIGR00716">
    <property type="entry name" value="rnhC"/>
    <property type="match status" value="1"/>
</dbReference>
<dbReference type="PANTHER" id="PTHR10954:SF23">
    <property type="entry name" value="RIBONUCLEASE"/>
    <property type="match status" value="1"/>
</dbReference>
<dbReference type="PANTHER" id="PTHR10954">
    <property type="entry name" value="RIBONUCLEASE H2 SUBUNIT A"/>
    <property type="match status" value="1"/>
</dbReference>
<dbReference type="Pfam" id="PF11858">
    <property type="entry name" value="DUF3378"/>
    <property type="match status" value="1"/>
</dbReference>
<dbReference type="Pfam" id="PF01351">
    <property type="entry name" value="RNase_HII"/>
    <property type="match status" value="1"/>
</dbReference>
<dbReference type="PIRSF" id="PIRSF037748">
    <property type="entry name" value="RnhC"/>
    <property type="match status" value="1"/>
</dbReference>
<dbReference type="SUPFAM" id="SSF53098">
    <property type="entry name" value="Ribonuclease H-like"/>
    <property type="match status" value="1"/>
</dbReference>
<dbReference type="PROSITE" id="PS51975">
    <property type="entry name" value="RNASE_H_2"/>
    <property type="match status" value="1"/>
</dbReference>
<accession>P94541</accession>
<evidence type="ECO:0000250" key="1"/>
<evidence type="ECO:0000255" key="2">
    <source>
        <dbReference type="PROSITE-ProRule" id="PRU01319"/>
    </source>
</evidence>
<evidence type="ECO:0000256" key="3">
    <source>
        <dbReference type="SAM" id="MobiDB-lite"/>
    </source>
</evidence>
<evidence type="ECO:0000269" key="4">
    <source>
    </source>
</evidence>
<evidence type="ECO:0000305" key="5"/>
<gene>
    <name type="primary">rnhC</name>
    <name type="synonym">ysgB</name>
    <name type="ordered locus">BSU28620</name>
</gene>
<organism>
    <name type="scientific">Bacillus subtilis (strain 168)</name>
    <dbReference type="NCBI Taxonomy" id="224308"/>
    <lineage>
        <taxon>Bacteria</taxon>
        <taxon>Bacillati</taxon>
        <taxon>Bacillota</taxon>
        <taxon>Bacilli</taxon>
        <taxon>Bacillales</taxon>
        <taxon>Bacillaceae</taxon>
        <taxon>Bacillus</taxon>
    </lineage>
</organism>
<feature type="chain" id="PRO_0000111680" description="Ribonuclease HIII">
    <location>
        <begin position="1"/>
        <end position="313"/>
    </location>
</feature>
<feature type="domain" description="RNase H type-2" evidence="2">
    <location>
        <begin position="94"/>
        <end position="310"/>
    </location>
</feature>
<feature type="region of interest" description="Disordered" evidence="3">
    <location>
        <begin position="63"/>
        <end position="85"/>
    </location>
</feature>
<feature type="compositionally biased region" description="Basic and acidic residues" evidence="3">
    <location>
        <begin position="70"/>
        <end position="82"/>
    </location>
</feature>
<feature type="binding site" evidence="1">
    <location>
        <position position="100"/>
    </location>
    <ligand>
        <name>a divalent metal cation</name>
        <dbReference type="ChEBI" id="CHEBI:60240"/>
    </ligand>
</feature>
<feature type="binding site" evidence="1">
    <location>
        <position position="101"/>
    </location>
    <ligand>
        <name>a divalent metal cation</name>
        <dbReference type="ChEBI" id="CHEBI:60240"/>
    </ligand>
</feature>
<feature type="binding site" evidence="1">
    <location>
        <position position="205"/>
    </location>
    <ligand>
        <name>a divalent metal cation</name>
        <dbReference type="ChEBI" id="CHEBI:60240"/>
    </ligand>
</feature>
<reference key="1">
    <citation type="journal article" date="1996" name="Microbiology">
        <title>The dnaB-pheA (256 degrees-240 degrees) region of the Bacillus subtilis chromosome containing genes responsible for stress responses, the utilization of plant cell walls and primary metabolism.</title>
        <authorList>
            <person name="Wipat A."/>
            <person name="Carter N."/>
            <person name="Brignell C.S."/>
            <person name="Guy J.B."/>
            <person name="Piper K."/>
            <person name="Sanders J."/>
            <person name="Emmerson P.T."/>
            <person name="Harwood C.R."/>
        </authorList>
    </citation>
    <scope>NUCLEOTIDE SEQUENCE [GENOMIC DNA]</scope>
    <source>
        <strain>168</strain>
    </source>
</reference>
<reference key="2">
    <citation type="journal article" date="1997" name="Nature">
        <title>The complete genome sequence of the Gram-positive bacterium Bacillus subtilis.</title>
        <authorList>
            <person name="Kunst F."/>
            <person name="Ogasawara N."/>
            <person name="Moszer I."/>
            <person name="Albertini A.M."/>
            <person name="Alloni G."/>
            <person name="Azevedo V."/>
            <person name="Bertero M.G."/>
            <person name="Bessieres P."/>
            <person name="Bolotin A."/>
            <person name="Borchert S."/>
            <person name="Borriss R."/>
            <person name="Boursier L."/>
            <person name="Brans A."/>
            <person name="Braun M."/>
            <person name="Brignell S.C."/>
            <person name="Bron S."/>
            <person name="Brouillet S."/>
            <person name="Bruschi C.V."/>
            <person name="Caldwell B."/>
            <person name="Capuano V."/>
            <person name="Carter N.M."/>
            <person name="Choi S.-K."/>
            <person name="Codani J.-J."/>
            <person name="Connerton I.F."/>
            <person name="Cummings N.J."/>
            <person name="Daniel R.A."/>
            <person name="Denizot F."/>
            <person name="Devine K.M."/>
            <person name="Duesterhoeft A."/>
            <person name="Ehrlich S.D."/>
            <person name="Emmerson P.T."/>
            <person name="Entian K.-D."/>
            <person name="Errington J."/>
            <person name="Fabret C."/>
            <person name="Ferrari E."/>
            <person name="Foulger D."/>
            <person name="Fritz C."/>
            <person name="Fujita M."/>
            <person name="Fujita Y."/>
            <person name="Fuma S."/>
            <person name="Galizzi A."/>
            <person name="Galleron N."/>
            <person name="Ghim S.-Y."/>
            <person name="Glaser P."/>
            <person name="Goffeau A."/>
            <person name="Golightly E.J."/>
            <person name="Grandi G."/>
            <person name="Guiseppi G."/>
            <person name="Guy B.J."/>
            <person name="Haga K."/>
            <person name="Haiech J."/>
            <person name="Harwood C.R."/>
            <person name="Henaut A."/>
            <person name="Hilbert H."/>
            <person name="Holsappel S."/>
            <person name="Hosono S."/>
            <person name="Hullo M.-F."/>
            <person name="Itaya M."/>
            <person name="Jones L.-M."/>
            <person name="Joris B."/>
            <person name="Karamata D."/>
            <person name="Kasahara Y."/>
            <person name="Klaerr-Blanchard M."/>
            <person name="Klein C."/>
            <person name="Kobayashi Y."/>
            <person name="Koetter P."/>
            <person name="Koningstein G."/>
            <person name="Krogh S."/>
            <person name="Kumano M."/>
            <person name="Kurita K."/>
            <person name="Lapidus A."/>
            <person name="Lardinois S."/>
            <person name="Lauber J."/>
            <person name="Lazarevic V."/>
            <person name="Lee S.-M."/>
            <person name="Levine A."/>
            <person name="Liu H."/>
            <person name="Masuda S."/>
            <person name="Mauel C."/>
            <person name="Medigue C."/>
            <person name="Medina N."/>
            <person name="Mellado R.P."/>
            <person name="Mizuno M."/>
            <person name="Moestl D."/>
            <person name="Nakai S."/>
            <person name="Noback M."/>
            <person name="Noone D."/>
            <person name="O'Reilly M."/>
            <person name="Ogawa K."/>
            <person name="Ogiwara A."/>
            <person name="Oudega B."/>
            <person name="Park S.-H."/>
            <person name="Parro V."/>
            <person name="Pohl T.M."/>
            <person name="Portetelle D."/>
            <person name="Porwollik S."/>
            <person name="Prescott A.M."/>
            <person name="Presecan E."/>
            <person name="Pujic P."/>
            <person name="Purnelle B."/>
            <person name="Rapoport G."/>
            <person name="Rey M."/>
            <person name="Reynolds S."/>
            <person name="Rieger M."/>
            <person name="Rivolta C."/>
            <person name="Rocha E."/>
            <person name="Roche B."/>
            <person name="Rose M."/>
            <person name="Sadaie Y."/>
            <person name="Sato T."/>
            <person name="Scanlan E."/>
            <person name="Schleich S."/>
            <person name="Schroeter R."/>
            <person name="Scoffone F."/>
            <person name="Sekiguchi J."/>
            <person name="Sekowska A."/>
            <person name="Seror S.J."/>
            <person name="Serror P."/>
            <person name="Shin B.-S."/>
            <person name="Soldo B."/>
            <person name="Sorokin A."/>
            <person name="Tacconi E."/>
            <person name="Takagi T."/>
            <person name="Takahashi H."/>
            <person name="Takemaru K."/>
            <person name="Takeuchi M."/>
            <person name="Tamakoshi A."/>
            <person name="Tanaka T."/>
            <person name="Terpstra P."/>
            <person name="Tognoni A."/>
            <person name="Tosato V."/>
            <person name="Uchiyama S."/>
            <person name="Vandenbol M."/>
            <person name="Vannier F."/>
            <person name="Vassarotti A."/>
            <person name="Viari A."/>
            <person name="Wambutt R."/>
            <person name="Wedler E."/>
            <person name="Wedler H."/>
            <person name="Weitzenegger T."/>
            <person name="Winters P."/>
            <person name="Wipat A."/>
            <person name="Yamamoto H."/>
            <person name="Yamane K."/>
            <person name="Yasumoto K."/>
            <person name="Yata K."/>
            <person name="Yoshida K."/>
            <person name="Yoshikawa H.-F."/>
            <person name="Zumstein E."/>
            <person name="Yoshikawa H."/>
            <person name="Danchin A."/>
        </authorList>
    </citation>
    <scope>NUCLEOTIDE SEQUENCE [LARGE SCALE GENOMIC DNA]</scope>
    <source>
        <strain>168</strain>
    </source>
</reference>
<reference key="3">
    <citation type="journal article" date="1999" name="J. Bacteriol.">
        <title>Isolation of RNase H genes that are essential for growth of Bacillus subtilis 168.</title>
        <authorList>
            <person name="Itaya M."/>
            <person name="Omori A."/>
            <person name="Kanaya S."/>
            <person name="Crouch R.J."/>
            <person name="Tanaka T."/>
            <person name="Kondo K."/>
        </authorList>
    </citation>
    <scope>CHARACTERIZATION</scope>
</reference>
<reference key="4">
    <citation type="journal article" date="1999" name="Biochemistry">
        <title>Identification of the genes encoding Mn2+-dependent RNase HII and Mg2+-dependent RNase HIII from Bacillus subtilis: classification of RNases H into three families.</title>
        <authorList>
            <person name="Ohtani N."/>
            <person name="Haruki M."/>
            <person name="Morikawa M."/>
            <person name="Crouch R.J."/>
            <person name="Itaya M."/>
            <person name="Kanaya S."/>
        </authorList>
    </citation>
    <scope>CHARACTERIZATION</scope>
</reference>
<reference key="5">
    <citation type="journal article" date="2011" name="Proteomics">
        <title>The dynamic protein partnership of RNA polymerase in Bacillus subtilis.</title>
        <authorList>
            <person name="Delumeau O."/>
            <person name="Lecointe F."/>
            <person name="Muntel J."/>
            <person name="Guillot A."/>
            <person name="Guedon E."/>
            <person name="Monnet V."/>
            <person name="Hecker M."/>
            <person name="Becher D."/>
            <person name="Polard P."/>
            <person name="Noirot P."/>
        </authorList>
    </citation>
    <scope>SUBUNIT</scope>
    <source>
        <strain>168</strain>
    </source>
</reference>
<keyword id="KW-0963">Cytoplasm</keyword>
<keyword id="KW-0255">Endonuclease</keyword>
<keyword id="KW-0378">Hydrolase</keyword>
<keyword id="KW-0460">Magnesium</keyword>
<keyword id="KW-0479">Metal-binding</keyword>
<keyword id="KW-0540">Nuclease</keyword>
<keyword id="KW-1185">Reference proteome</keyword>
<comment type="function">
    <text evidence="1">Endonuclease that specifically degrades the RNA of RNA-DNA hybrids.</text>
</comment>
<comment type="catalytic activity">
    <reaction>
        <text>Endonucleolytic cleavage to 5'-phosphomonoester.</text>
        <dbReference type="EC" id="3.1.26.4"/>
    </reaction>
</comment>
<comment type="cofactor">
    <cofactor evidence="1">
        <name>Mn(2+)</name>
        <dbReference type="ChEBI" id="CHEBI:29035"/>
    </cofactor>
    <cofactor evidence="1">
        <name>Mg(2+)</name>
        <dbReference type="ChEBI" id="CHEBI:18420"/>
    </cofactor>
    <text evidence="1">Manganese or magnesium. Binds 1 divalent metal ion per monomer in the absence of substrate. May bind a second metal ion after substrate binding.</text>
</comment>
<comment type="subunit">
    <text evidence="4">Interacts with the RNA polymerase core.</text>
</comment>
<comment type="subcellular location">
    <subcellularLocation>
        <location evidence="5">Cytoplasm</location>
    </subcellularLocation>
</comment>
<comment type="similarity">
    <text evidence="5">Belongs to the RNase HII family. RnhC subfamily.</text>
</comment>
<proteinExistence type="evidence at protein level"/>
<sequence length="313" mass="34070">MSHSVIKVSLSAIDQMKMTYSGSLTASVPQGAVFQAKPPGCTITAYQSGKVLFQGKNAAAESARWGTAEPQEKKKTAKKPADPRYAPPADIAGMSVIGSDEVGTGDYFGPMTVVCAYVDKTMLPLMKELGVKDSKDLKDPQIIEIARNLIKTIPYSLLVLKNEKYNSMQEKGMSQGKMKALLHNQAITHLLRKLDGVKPEAILIDQFAEPGVYFNHLKGRDIVKERTYFSTKAEGIHLAVAAASIIARYSFLMEMDKLSRAAGMTLPKGAGPHVDEAAAKLILKKGASALRTFTKLHFANTQKAQRLADKKRS</sequence>
<name>RNH3_BACSU</name>